<keyword id="KW-0030">Aminoacyl-tRNA synthetase</keyword>
<keyword id="KW-0067">ATP-binding</keyword>
<keyword id="KW-0963">Cytoplasm</keyword>
<keyword id="KW-0436">Ligase</keyword>
<keyword id="KW-0479">Metal-binding</keyword>
<keyword id="KW-0547">Nucleotide-binding</keyword>
<keyword id="KW-0648">Protein biosynthesis</keyword>
<keyword id="KW-0694">RNA-binding</keyword>
<keyword id="KW-0820">tRNA-binding</keyword>
<keyword id="KW-0862">Zinc</keyword>
<protein>
    <recommendedName>
        <fullName evidence="1">Threonine--tRNA ligase</fullName>
        <ecNumber evidence="1">6.1.1.3</ecNumber>
    </recommendedName>
    <alternativeName>
        <fullName evidence="1">Threonyl-tRNA synthetase</fullName>
        <shortName evidence="1">ThrRS</shortName>
    </alternativeName>
</protein>
<evidence type="ECO:0000255" key="1">
    <source>
        <dbReference type="HAMAP-Rule" id="MF_00184"/>
    </source>
</evidence>
<evidence type="ECO:0000255" key="2">
    <source>
        <dbReference type="PROSITE-ProRule" id="PRU01228"/>
    </source>
</evidence>
<reference key="1">
    <citation type="submission" date="2007-12" db="EMBL/GenBank/DDBJ databases">
        <title>Complete sequence of chromosome of Francisella philomiragia subsp. philomiragia ATCC 25017.</title>
        <authorList>
            <consortium name="US DOE Joint Genome Institute"/>
            <person name="Copeland A."/>
            <person name="Lucas S."/>
            <person name="Lapidus A."/>
            <person name="Barry K."/>
            <person name="Detter J.C."/>
            <person name="Glavina del Rio T."/>
            <person name="Hammon N."/>
            <person name="Israni S."/>
            <person name="Dalin E."/>
            <person name="Tice H."/>
            <person name="Pitluck S."/>
            <person name="Chain P."/>
            <person name="Malfatti S."/>
            <person name="Shin M."/>
            <person name="Vergez L."/>
            <person name="Schmutz J."/>
            <person name="Larimer F."/>
            <person name="Land M."/>
            <person name="Hauser L."/>
            <person name="Richardson P."/>
        </authorList>
    </citation>
    <scope>NUCLEOTIDE SEQUENCE [LARGE SCALE GENOMIC DNA]</scope>
    <source>
        <strain>ATCC 25017 / CCUG 19701 / FSC 153 / O#319-036</strain>
    </source>
</reference>
<name>SYT_FRAP2</name>
<dbReference type="EC" id="6.1.1.3" evidence="1"/>
<dbReference type="EMBL" id="CP000937">
    <property type="protein sequence ID" value="ABZ86331.1"/>
    <property type="molecule type" value="Genomic_DNA"/>
</dbReference>
<dbReference type="SMR" id="B0TY89"/>
<dbReference type="KEGG" id="fph:Fphi_0110"/>
<dbReference type="eggNOG" id="COG0441">
    <property type="taxonomic scope" value="Bacteria"/>
</dbReference>
<dbReference type="HOGENOM" id="CLU_008554_0_1_6"/>
<dbReference type="GO" id="GO:0005737">
    <property type="term" value="C:cytoplasm"/>
    <property type="evidence" value="ECO:0007669"/>
    <property type="project" value="UniProtKB-SubCell"/>
</dbReference>
<dbReference type="GO" id="GO:0005524">
    <property type="term" value="F:ATP binding"/>
    <property type="evidence" value="ECO:0007669"/>
    <property type="project" value="UniProtKB-UniRule"/>
</dbReference>
<dbReference type="GO" id="GO:0046872">
    <property type="term" value="F:metal ion binding"/>
    <property type="evidence" value="ECO:0007669"/>
    <property type="project" value="UniProtKB-KW"/>
</dbReference>
<dbReference type="GO" id="GO:0004829">
    <property type="term" value="F:threonine-tRNA ligase activity"/>
    <property type="evidence" value="ECO:0007669"/>
    <property type="project" value="UniProtKB-UniRule"/>
</dbReference>
<dbReference type="GO" id="GO:0000049">
    <property type="term" value="F:tRNA binding"/>
    <property type="evidence" value="ECO:0007669"/>
    <property type="project" value="UniProtKB-KW"/>
</dbReference>
<dbReference type="GO" id="GO:0006435">
    <property type="term" value="P:threonyl-tRNA aminoacylation"/>
    <property type="evidence" value="ECO:0007669"/>
    <property type="project" value="UniProtKB-UniRule"/>
</dbReference>
<dbReference type="CDD" id="cd01667">
    <property type="entry name" value="TGS_ThrRS"/>
    <property type="match status" value="1"/>
</dbReference>
<dbReference type="CDD" id="cd00860">
    <property type="entry name" value="ThrRS_anticodon"/>
    <property type="match status" value="1"/>
</dbReference>
<dbReference type="CDD" id="cd00771">
    <property type="entry name" value="ThrRS_core"/>
    <property type="match status" value="1"/>
</dbReference>
<dbReference type="FunFam" id="3.10.20.30:FF:000005">
    <property type="entry name" value="Threonine--tRNA ligase"/>
    <property type="match status" value="1"/>
</dbReference>
<dbReference type="FunFam" id="3.30.54.20:FF:000002">
    <property type="entry name" value="Threonine--tRNA ligase"/>
    <property type="match status" value="1"/>
</dbReference>
<dbReference type="FunFam" id="3.30.930.10:FF:000002">
    <property type="entry name" value="Threonine--tRNA ligase"/>
    <property type="match status" value="1"/>
</dbReference>
<dbReference type="FunFam" id="3.40.50.800:FF:000001">
    <property type="entry name" value="Threonine--tRNA ligase"/>
    <property type="match status" value="1"/>
</dbReference>
<dbReference type="FunFam" id="3.30.980.10:FF:000005">
    <property type="entry name" value="Threonyl-tRNA synthetase, mitochondrial"/>
    <property type="match status" value="1"/>
</dbReference>
<dbReference type="Gene3D" id="3.10.20.30">
    <property type="match status" value="1"/>
</dbReference>
<dbReference type="Gene3D" id="3.30.54.20">
    <property type="match status" value="1"/>
</dbReference>
<dbReference type="Gene3D" id="3.40.50.800">
    <property type="entry name" value="Anticodon-binding domain"/>
    <property type="match status" value="1"/>
</dbReference>
<dbReference type="Gene3D" id="3.30.930.10">
    <property type="entry name" value="Bira Bifunctional Protein, Domain 2"/>
    <property type="match status" value="1"/>
</dbReference>
<dbReference type="Gene3D" id="3.30.980.10">
    <property type="entry name" value="Threonyl-trna Synthetase, Chain A, domain 2"/>
    <property type="match status" value="1"/>
</dbReference>
<dbReference type="HAMAP" id="MF_00184">
    <property type="entry name" value="Thr_tRNA_synth"/>
    <property type="match status" value="1"/>
</dbReference>
<dbReference type="InterPro" id="IPR002314">
    <property type="entry name" value="aa-tRNA-synt_IIb"/>
</dbReference>
<dbReference type="InterPro" id="IPR006195">
    <property type="entry name" value="aa-tRNA-synth_II"/>
</dbReference>
<dbReference type="InterPro" id="IPR045864">
    <property type="entry name" value="aa-tRNA-synth_II/BPL/LPL"/>
</dbReference>
<dbReference type="InterPro" id="IPR004154">
    <property type="entry name" value="Anticodon-bd"/>
</dbReference>
<dbReference type="InterPro" id="IPR036621">
    <property type="entry name" value="Anticodon-bd_dom_sf"/>
</dbReference>
<dbReference type="InterPro" id="IPR012675">
    <property type="entry name" value="Beta-grasp_dom_sf"/>
</dbReference>
<dbReference type="InterPro" id="IPR004095">
    <property type="entry name" value="TGS"/>
</dbReference>
<dbReference type="InterPro" id="IPR012676">
    <property type="entry name" value="TGS-like"/>
</dbReference>
<dbReference type="InterPro" id="IPR002320">
    <property type="entry name" value="Thr-tRNA-ligase_IIa"/>
</dbReference>
<dbReference type="InterPro" id="IPR018163">
    <property type="entry name" value="Thr/Ala-tRNA-synth_IIc_edit"/>
</dbReference>
<dbReference type="InterPro" id="IPR047246">
    <property type="entry name" value="ThrRS_anticodon"/>
</dbReference>
<dbReference type="InterPro" id="IPR033728">
    <property type="entry name" value="ThrRS_core"/>
</dbReference>
<dbReference type="InterPro" id="IPR012947">
    <property type="entry name" value="tRNA_SAD"/>
</dbReference>
<dbReference type="NCBIfam" id="TIGR00418">
    <property type="entry name" value="thrS"/>
    <property type="match status" value="1"/>
</dbReference>
<dbReference type="PANTHER" id="PTHR11451:SF44">
    <property type="entry name" value="THREONINE--TRNA LIGASE, CHLOROPLASTIC_MITOCHONDRIAL 2"/>
    <property type="match status" value="1"/>
</dbReference>
<dbReference type="PANTHER" id="PTHR11451">
    <property type="entry name" value="THREONINE-TRNA LIGASE"/>
    <property type="match status" value="1"/>
</dbReference>
<dbReference type="Pfam" id="PF03129">
    <property type="entry name" value="HGTP_anticodon"/>
    <property type="match status" value="1"/>
</dbReference>
<dbReference type="Pfam" id="PF02824">
    <property type="entry name" value="TGS"/>
    <property type="match status" value="1"/>
</dbReference>
<dbReference type="Pfam" id="PF00587">
    <property type="entry name" value="tRNA-synt_2b"/>
    <property type="match status" value="1"/>
</dbReference>
<dbReference type="Pfam" id="PF07973">
    <property type="entry name" value="tRNA_SAD"/>
    <property type="match status" value="1"/>
</dbReference>
<dbReference type="PRINTS" id="PR01047">
    <property type="entry name" value="TRNASYNTHTHR"/>
</dbReference>
<dbReference type="SMART" id="SM00863">
    <property type="entry name" value="tRNA_SAD"/>
    <property type="match status" value="1"/>
</dbReference>
<dbReference type="SUPFAM" id="SSF52954">
    <property type="entry name" value="Class II aaRS ABD-related"/>
    <property type="match status" value="1"/>
</dbReference>
<dbReference type="SUPFAM" id="SSF55681">
    <property type="entry name" value="Class II aaRS and biotin synthetases"/>
    <property type="match status" value="1"/>
</dbReference>
<dbReference type="SUPFAM" id="SSF81271">
    <property type="entry name" value="TGS-like"/>
    <property type="match status" value="1"/>
</dbReference>
<dbReference type="SUPFAM" id="SSF55186">
    <property type="entry name" value="ThrRS/AlaRS common domain"/>
    <property type="match status" value="1"/>
</dbReference>
<dbReference type="PROSITE" id="PS50862">
    <property type="entry name" value="AA_TRNA_LIGASE_II"/>
    <property type="match status" value="1"/>
</dbReference>
<dbReference type="PROSITE" id="PS51880">
    <property type="entry name" value="TGS"/>
    <property type="match status" value="1"/>
</dbReference>
<feature type="chain" id="PRO_1000077359" description="Threonine--tRNA ligase">
    <location>
        <begin position="1"/>
        <end position="635"/>
    </location>
</feature>
<feature type="domain" description="TGS" evidence="2">
    <location>
        <begin position="1"/>
        <end position="61"/>
    </location>
</feature>
<feature type="region of interest" description="Catalytic" evidence="1">
    <location>
        <begin position="242"/>
        <end position="533"/>
    </location>
</feature>
<feature type="binding site" evidence="1">
    <location>
        <position position="333"/>
    </location>
    <ligand>
        <name>Zn(2+)</name>
        <dbReference type="ChEBI" id="CHEBI:29105"/>
    </ligand>
</feature>
<feature type="binding site" evidence="1">
    <location>
        <position position="384"/>
    </location>
    <ligand>
        <name>Zn(2+)</name>
        <dbReference type="ChEBI" id="CHEBI:29105"/>
    </ligand>
</feature>
<feature type="binding site" evidence="1">
    <location>
        <position position="510"/>
    </location>
    <ligand>
        <name>Zn(2+)</name>
        <dbReference type="ChEBI" id="CHEBI:29105"/>
    </ligand>
</feature>
<sequence length="635" mass="72262">MINIKFPDGSIREFESGVNSLQIAKSISPSLAKITVGAYIDNKLSDAKDVINHDCELRLITTKDTEGLEILRHSCAHLLANAVKELYPNTEVTIGPVIDNGFYYDFSFKETIGEADLANIEKRMKEIAKKGSSISYKVVSKEDAIAFFKAQGENYKVDIIESIPADQQIKIYTQGDFSDLCRGPHVPSTAAIKAFKLTKLAGAYWRGDSNNEMLTRIYGTCWATKEDLDQYLHMLEEAEKRDHRKIGKALDLFHFQEDSPGIAFWHDNGVRIWREVEDYMRASNKKYGCGEIRTPLIADFSLWEKSGHASKYAENMFATKSENRDFAIRPMNCPTCVQVYNTKLHSYRDLPIRMAEFGIVHRNEPSGSLHGLMRVRSFTQDDGHIFCAPEQVEEEVILMVKQCFEVYKDFGFNDFTVKIALRPENRIGNDETWDKSEQMLKNALDANNVAYELLPGEGAFYGPKIEFHLKDAIGRSWQCGTIQLDFSMPDRLGATYIDKNGNKQVPVMLHRAIVGSLERFIGMLIEHYAGNMPLWLTPVQVAVMGISNHQDEYCQKVFETLEKNGIRAKLDLRNEKIGFKIREHTLLRVPYLVILGKSEQEQEIVTVRKHNGEDLGQMSIGDFCAFLNEQIEAKK</sequence>
<gene>
    <name evidence="1" type="primary">thrS</name>
    <name type="ordered locus">Fphi_0110</name>
</gene>
<organism>
    <name type="scientific">Francisella philomiragia subsp. philomiragia (strain ATCC 25017 / CCUG 19701 / FSC 153 / O#319-036)</name>
    <dbReference type="NCBI Taxonomy" id="484022"/>
    <lineage>
        <taxon>Bacteria</taxon>
        <taxon>Pseudomonadati</taxon>
        <taxon>Pseudomonadota</taxon>
        <taxon>Gammaproteobacteria</taxon>
        <taxon>Thiotrichales</taxon>
        <taxon>Francisellaceae</taxon>
        <taxon>Francisella</taxon>
    </lineage>
</organism>
<accession>B0TY89</accession>
<comment type="function">
    <text evidence="1">Catalyzes the attachment of threonine to tRNA(Thr) in a two-step reaction: L-threonine is first activated by ATP to form Thr-AMP and then transferred to the acceptor end of tRNA(Thr). Also edits incorrectly charged L-seryl-tRNA(Thr).</text>
</comment>
<comment type="catalytic activity">
    <reaction evidence="1">
        <text>tRNA(Thr) + L-threonine + ATP = L-threonyl-tRNA(Thr) + AMP + diphosphate + H(+)</text>
        <dbReference type="Rhea" id="RHEA:24624"/>
        <dbReference type="Rhea" id="RHEA-COMP:9670"/>
        <dbReference type="Rhea" id="RHEA-COMP:9704"/>
        <dbReference type="ChEBI" id="CHEBI:15378"/>
        <dbReference type="ChEBI" id="CHEBI:30616"/>
        <dbReference type="ChEBI" id="CHEBI:33019"/>
        <dbReference type="ChEBI" id="CHEBI:57926"/>
        <dbReference type="ChEBI" id="CHEBI:78442"/>
        <dbReference type="ChEBI" id="CHEBI:78534"/>
        <dbReference type="ChEBI" id="CHEBI:456215"/>
        <dbReference type="EC" id="6.1.1.3"/>
    </reaction>
</comment>
<comment type="cofactor">
    <cofactor evidence="1">
        <name>Zn(2+)</name>
        <dbReference type="ChEBI" id="CHEBI:29105"/>
    </cofactor>
    <text evidence="1">Binds 1 zinc ion per subunit.</text>
</comment>
<comment type="subunit">
    <text evidence="1">Homodimer.</text>
</comment>
<comment type="subcellular location">
    <subcellularLocation>
        <location evidence="1">Cytoplasm</location>
    </subcellularLocation>
</comment>
<comment type="similarity">
    <text evidence="1">Belongs to the class-II aminoacyl-tRNA synthetase family.</text>
</comment>
<proteinExistence type="inferred from homology"/>